<protein>
    <recommendedName>
        <fullName>Relaxosome protein TraM</fullName>
    </recommendedName>
</protein>
<evidence type="ECO:0000250" key="1"/>
<evidence type="ECO:0000305" key="2"/>
<sequence>MAKVNLYISNDAYEKINAIIEKRRQEGAREKDVSFSATASMLLELGLRVYEAQMERKESAFNQAEFNKLLLECVVKTQSTVAKILGIESLSPHVSGNPKFEYSNMVEDIREKVSVEMERFFPKNDDE</sequence>
<accession>P18808</accession>
<name>TRAM6_ECOLX</name>
<organism>
    <name type="scientific">Escherichia coli</name>
    <dbReference type="NCBI Taxonomy" id="562"/>
    <lineage>
        <taxon>Bacteria</taxon>
        <taxon>Pseudomonadati</taxon>
        <taxon>Pseudomonadota</taxon>
        <taxon>Gammaproteobacteria</taxon>
        <taxon>Enterobacterales</taxon>
        <taxon>Enterobacteriaceae</taxon>
        <taxon>Escherichia</taxon>
    </lineage>
</organism>
<keyword id="KW-0184">Conjugation</keyword>
<keyword id="KW-0963">Cytoplasm</keyword>
<keyword id="KW-0238">DNA-binding</keyword>
<keyword id="KW-0614">Plasmid</keyword>
<keyword id="KW-0804">Transcription</keyword>
<keyword id="KW-0805">Transcription regulation</keyword>
<gene>
    <name type="primary">traM</name>
</gene>
<comment type="function">
    <text evidence="1">Conjugative DNA transfer (CDT) is the unidirectional transfer of ssDNA plasmid from a donor to a recipient cell. It is the central mechanism by which antibiotic resistance and virulence factors are propagated in bacterial populations. Part of the relaxosome, which facilitates a site- and strand-specific cut in the origin of transfer by TraI, at the nic site. Probably autoregulates its own expression. Plasmid specificity is conferred by the TraD-TraM pair (By similarity).</text>
</comment>
<comment type="subunit">
    <text evidence="1">Homotetramer. 2 homotetramers cooperatively bind to DNA although they do not contact each other; cooperativity is achieved by DNA kinking and unwinding. Part of the relaxosome, a complex composed of plasmid encoded TraI, TraM, TraY and host-encoded IHF which binds to the F plasmid origin of transfer (oriT) in a site- and sequence-specific manner. Interacts with TraD. Also interacts with TraY (By similarity).</text>
</comment>
<comment type="subcellular location">
    <subcellularLocation>
        <location evidence="1">Cytoplasm</location>
    </subcellularLocation>
</comment>
<comment type="similarity">
    <text evidence="2">Belongs to the relaxosome TraM family.</text>
</comment>
<feature type="chain" id="PRO_0000068470" description="Relaxosome protein TraM">
    <location>
        <begin position="1"/>
        <end position="127"/>
    </location>
</feature>
<geneLocation type="plasmid">
    <name>IncFI P307</name>
</geneLocation>
<reference key="1">
    <citation type="journal article" date="1990" name="Plasmid">
        <title>The sequences of genes bordering oriT in the enterotoxin plasmid P307: comparison with the sequences of plasmids F and R1.</title>
        <authorList>
            <person name="Graus-Goeldner A."/>
            <person name="Graus H."/>
            <person name="Schlacher T."/>
            <person name="Hoegenauer G."/>
        </authorList>
    </citation>
    <scope>NUCLEOTIDE SEQUENCE [GENOMIC DNA]</scope>
    <source>
        <strain>711</strain>
    </source>
</reference>
<reference key="2">
    <citation type="journal article" date="1987" name="Plasmid">
        <title>The origin of transfer of P307.</title>
        <authorList>
            <person name="Goeldner A."/>
            <person name="Graus H."/>
            <person name="Hoegenauer G."/>
        </authorList>
    </citation>
    <scope>NUCLEOTIDE SEQUENCE [GENOMIC DNA] OF 1-24</scope>
</reference>
<proteinExistence type="inferred from homology"/>
<dbReference type="EMBL" id="M62986">
    <property type="protein sequence ID" value="AAA25522.1"/>
    <property type="molecule type" value="Genomic_DNA"/>
</dbReference>
<dbReference type="EMBL" id="X06534">
    <property type="protein sequence ID" value="CAA29783.1"/>
    <property type="molecule type" value="Genomic_DNA"/>
</dbReference>
<dbReference type="PIR" id="B37390">
    <property type="entry name" value="B37390"/>
</dbReference>
<dbReference type="RefSeq" id="WP_001151534.1">
    <property type="nucleotide sequence ID" value="NZ_OQ401022.1"/>
</dbReference>
<dbReference type="SMR" id="P18808"/>
<dbReference type="PATRIC" id="fig|562.6988.peg.1142"/>
<dbReference type="GO" id="GO:0005737">
    <property type="term" value="C:cytoplasm"/>
    <property type="evidence" value="ECO:0007669"/>
    <property type="project" value="UniProtKB-SubCell"/>
</dbReference>
<dbReference type="GO" id="GO:0003677">
    <property type="term" value="F:DNA binding"/>
    <property type="evidence" value="ECO:0007669"/>
    <property type="project" value="UniProtKB-KW"/>
</dbReference>
<dbReference type="CDD" id="cd14804">
    <property type="entry name" value="Tra_M"/>
    <property type="match status" value="1"/>
</dbReference>
<dbReference type="Gene3D" id="1.10.287.2320">
    <property type="match status" value="1"/>
</dbReference>
<dbReference type="Gene3D" id="1.10.10.450">
    <property type="entry name" value="TraM protein, DNA-binding"/>
    <property type="match status" value="1"/>
</dbReference>
<dbReference type="InterPro" id="IPR010992">
    <property type="entry name" value="IHF-like_DNA-bd_dom_sf"/>
</dbReference>
<dbReference type="InterPro" id="IPR042073">
    <property type="entry name" value="TraM_DNA-bd"/>
</dbReference>
<dbReference type="InterPro" id="IPR007925">
    <property type="entry name" value="TRelaxosome_TraM"/>
</dbReference>
<dbReference type="NCBIfam" id="NF010267">
    <property type="entry name" value="PRK13713.1"/>
    <property type="match status" value="1"/>
</dbReference>
<dbReference type="Pfam" id="PF05261">
    <property type="entry name" value="Tra_M"/>
    <property type="match status" value="1"/>
</dbReference>
<dbReference type="SUPFAM" id="SSF47729">
    <property type="entry name" value="IHF-like DNA-binding proteins"/>
    <property type="match status" value="1"/>
</dbReference>
<dbReference type="SUPFAM" id="SSF140581">
    <property type="entry name" value="TraM-like"/>
    <property type="match status" value="1"/>
</dbReference>